<organism>
    <name type="scientific">Blochmanniella floridana</name>
    <dbReference type="NCBI Taxonomy" id="203907"/>
    <lineage>
        <taxon>Bacteria</taxon>
        <taxon>Pseudomonadati</taxon>
        <taxon>Pseudomonadota</taxon>
        <taxon>Gammaproteobacteria</taxon>
        <taxon>Enterobacterales</taxon>
        <taxon>Enterobacteriaceae</taxon>
        <taxon>ant endosymbionts</taxon>
        <taxon>Candidatus Blochmanniella</taxon>
    </lineage>
</organism>
<name>UBIE_BLOFL</name>
<gene>
    <name evidence="1" type="primary">ubiE</name>
    <name type="ordered locus">Bfl622</name>
</gene>
<sequence>MYKKKIKKNTITHFGFQNVPTFIKSYLVSNVFHKVATKYDLMNDLMSFGIHRIWKQFLIQQSEVHNGYKVLDLAGGTGDLSIKFSKLVGKKGIVILLDNNDTMLRLGQKKLRNLGILNNVHYIQANAEFLPFSENTFNCVAISFGLRNFTYKQKSLYEIYRVLRPGGKLLILDFSIPTSKLLTILYDLYSFHIIPKIGKIIAQDSKSYQYLVESIRMHPDQETLKNMILSIGFNDVQYFNMTGGIAALHCAYKY</sequence>
<evidence type="ECO:0000255" key="1">
    <source>
        <dbReference type="HAMAP-Rule" id="MF_01813"/>
    </source>
</evidence>
<accession>Q7VRJ1</accession>
<comment type="function">
    <text evidence="1">Methyltransferase required for the conversion of demethylmenaquinol (DMKH2) to menaquinol (MKH2) and the conversion of 2-polyprenyl-6-methoxy-1,4-benzoquinol (DDMQH2) to 2-polyprenyl-3-methyl-6-methoxy-1,4-benzoquinol (DMQH2).</text>
</comment>
<comment type="catalytic activity">
    <reaction evidence="1">
        <text>a 2-demethylmenaquinol + S-adenosyl-L-methionine = a menaquinol + S-adenosyl-L-homocysteine + H(+)</text>
        <dbReference type="Rhea" id="RHEA:42640"/>
        <dbReference type="Rhea" id="RHEA-COMP:9539"/>
        <dbReference type="Rhea" id="RHEA-COMP:9563"/>
        <dbReference type="ChEBI" id="CHEBI:15378"/>
        <dbReference type="ChEBI" id="CHEBI:18151"/>
        <dbReference type="ChEBI" id="CHEBI:55437"/>
        <dbReference type="ChEBI" id="CHEBI:57856"/>
        <dbReference type="ChEBI" id="CHEBI:59789"/>
        <dbReference type="EC" id="2.1.1.163"/>
    </reaction>
</comment>
<comment type="catalytic activity">
    <reaction evidence="1">
        <text>a 2-methoxy-6-(all-trans-polyprenyl)benzene-1,4-diol + S-adenosyl-L-methionine = a 5-methoxy-2-methyl-3-(all-trans-polyprenyl)benzene-1,4-diol + S-adenosyl-L-homocysteine + H(+)</text>
        <dbReference type="Rhea" id="RHEA:28286"/>
        <dbReference type="Rhea" id="RHEA-COMP:10858"/>
        <dbReference type="Rhea" id="RHEA-COMP:10859"/>
        <dbReference type="ChEBI" id="CHEBI:15378"/>
        <dbReference type="ChEBI" id="CHEBI:57856"/>
        <dbReference type="ChEBI" id="CHEBI:59789"/>
        <dbReference type="ChEBI" id="CHEBI:84166"/>
        <dbReference type="ChEBI" id="CHEBI:84167"/>
        <dbReference type="EC" id="2.1.1.201"/>
    </reaction>
</comment>
<comment type="pathway">
    <text evidence="1">Quinol/quinone metabolism; menaquinone biosynthesis; menaquinol from 1,4-dihydroxy-2-naphthoate: step 2/2.</text>
</comment>
<comment type="pathway">
    <text evidence="1">Cofactor biosynthesis; ubiquinone biosynthesis.</text>
</comment>
<comment type="similarity">
    <text evidence="1">Belongs to the class I-like SAM-binding methyltransferase superfamily. MenG/UbiE family.</text>
</comment>
<dbReference type="EC" id="2.1.1.163" evidence="1"/>
<dbReference type="EC" id="2.1.1.201" evidence="1"/>
<dbReference type="EMBL" id="BX248583">
    <property type="protein sequence ID" value="CAD83297.1"/>
    <property type="molecule type" value="Genomic_DNA"/>
</dbReference>
<dbReference type="SMR" id="Q7VRJ1"/>
<dbReference type="STRING" id="203907.Bfl622"/>
<dbReference type="KEGG" id="bfl:Bfl622"/>
<dbReference type="eggNOG" id="COG2226">
    <property type="taxonomic scope" value="Bacteria"/>
</dbReference>
<dbReference type="HOGENOM" id="CLU_037990_0_0_6"/>
<dbReference type="OrthoDB" id="9808140at2"/>
<dbReference type="UniPathway" id="UPA00079">
    <property type="reaction ID" value="UER00169"/>
</dbReference>
<dbReference type="UniPathway" id="UPA00232"/>
<dbReference type="Proteomes" id="UP000002192">
    <property type="component" value="Chromosome"/>
</dbReference>
<dbReference type="GO" id="GO:0008425">
    <property type="term" value="F:2-methoxy-6-polyprenyl-1,4-benzoquinol methyltransferase activity"/>
    <property type="evidence" value="ECO:0007669"/>
    <property type="project" value="UniProtKB-UniRule"/>
</dbReference>
<dbReference type="GO" id="GO:0043770">
    <property type="term" value="F:demethylmenaquinone methyltransferase activity"/>
    <property type="evidence" value="ECO:0007669"/>
    <property type="project" value="UniProtKB-UniRule"/>
</dbReference>
<dbReference type="GO" id="GO:0009060">
    <property type="term" value="P:aerobic respiration"/>
    <property type="evidence" value="ECO:0007669"/>
    <property type="project" value="UniProtKB-UniRule"/>
</dbReference>
<dbReference type="GO" id="GO:0009234">
    <property type="term" value="P:menaquinone biosynthetic process"/>
    <property type="evidence" value="ECO:0007669"/>
    <property type="project" value="UniProtKB-UniRule"/>
</dbReference>
<dbReference type="GO" id="GO:0032259">
    <property type="term" value="P:methylation"/>
    <property type="evidence" value="ECO:0007669"/>
    <property type="project" value="UniProtKB-KW"/>
</dbReference>
<dbReference type="CDD" id="cd02440">
    <property type="entry name" value="AdoMet_MTases"/>
    <property type="match status" value="1"/>
</dbReference>
<dbReference type="FunFam" id="3.40.50.150:FF:000014">
    <property type="entry name" value="Ubiquinone/menaquinone biosynthesis C-methyltransferase UbiE"/>
    <property type="match status" value="1"/>
</dbReference>
<dbReference type="Gene3D" id="3.40.50.150">
    <property type="entry name" value="Vaccinia Virus protein VP39"/>
    <property type="match status" value="1"/>
</dbReference>
<dbReference type="HAMAP" id="MF_01813">
    <property type="entry name" value="MenG_UbiE_methyltr"/>
    <property type="match status" value="1"/>
</dbReference>
<dbReference type="InterPro" id="IPR029063">
    <property type="entry name" value="SAM-dependent_MTases_sf"/>
</dbReference>
<dbReference type="InterPro" id="IPR004033">
    <property type="entry name" value="UbiE/COQ5_MeTrFase"/>
</dbReference>
<dbReference type="InterPro" id="IPR023576">
    <property type="entry name" value="UbiE/COQ5_MeTrFase_CS"/>
</dbReference>
<dbReference type="NCBIfam" id="TIGR01934">
    <property type="entry name" value="MenG_MenH_UbiE"/>
    <property type="match status" value="1"/>
</dbReference>
<dbReference type="NCBIfam" id="NF001244">
    <property type="entry name" value="PRK00216.1-5"/>
    <property type="match status" value="1"/>
</dbReference>
<dbReference type="PANTHER" id="PTHR43591:SF24">
    <property type="entry name" value="2-METHOXY-6-POLYPRENYL-1,4-BENZOQUINOL METHYLASE, MITOCHONDRIAL"/>
    <property type="match status" value="1"/>
</dbReference>
<dbReference type="PANTHER" id="PTHR43591">
    <property type="entry name" value="METHYLTRANSFERASE"/>
    <property type="match status" value="1"/>
</dbReference>
<dbReference type="Pfam" id="PF01209">
    <property type="entry name" value="Ubie_methyltran"/>
    <property type="match status" value="1"/>
</dbReference>
<dbReference type="SUPFAM" id="SSF53335">
    <property type="entry name" value="S-adenosyl-L-methionine-dependent methyltransferases"/>
    <property type="match status" value="1"/>
</dbReference>
<dbReference type="PROSITE" id="PS51608">
    <property type="entry name" value="SAM_MT_UBIE"/>
    <property type="match status" value="1"/>
</dbReference>
<dbReference type="PROSITE" id="PS01183">
    <property type="entry name" value="UBIE_1"/>
    <property type="match status" value="1"/>
</dbReference>
<dbReference type="PROSITE" id="PS01184">
    <property type="entry name" value="UBIE_2"/>
    <property type="match status" value="1"/>
</dbReference>
<feature type="chain" id="PRO_0000193261" description="Ubiquinone/menaquinone biosynthesis C-methyltransferase UbiE">
    <location>
        <begin position="1"/>
        <end position="254"/>
    </location>
</feature>
<feature type="binding site" evidence="1">
    <location>
        <position position="77"/>
    </location>
    <ligand>
        <name>S-adenosyl-L-methionine</name>
        <dbReference type="ChEBI" id="CHEBI:59789"/>
    </ligand>
</feature>
<feature type="binding site" evidence="1">
    <location>
        <position position="98"/>
    </location>
    <ligand>
        <name>S-adenosyl-L-methionine</name>
        <dbReference type="ChEBI" id="CHEBI:59789"/>
    </ligand>
</feature>
<feature type="binding site" evidence="1">
    <location>
        <begin position="126"/>
        <end position="127"/>
    </location>
    <ligand>
        <name>S-adenosyl-L-methionine</name>
        <dbReference type="ChEBI" id="CHEBI:59789"/>
    </ligand>
</feature>
<feature type="binding site" evidence="1">
    <location>
        <position position="143"/>
    </location>
    <ligand>
        <name>S-adenosyl-L-methionine</name>
        <dbReference type="ChEBI" id="CHEBI:59789"/>
    </ligand>
</feature>
<proteinExistence type="inferred from homology"/>
<reference key="1">
    <citation type="journal article" date="2003" name="Proc. Natl. Acad. Sci. U.S.A.">
        <title>The genome sequence of Blochmannia floridanus: comparative analysis of reduced genomes.</title>
        <authorList>
            <person name="Gil R."/>
            <person name="Silva F.J."/>
            <person name="Zientz E."/>
            <person name="Delmotte F."/>
            <person name="Gonzalez-Candelas F."/>
            <person name="Latorre A."/>
            <person name="Rausell C."/>
            <person name="Kamerbeek J."/>
            <person name="Gadau J."/>
            <person name="Hoelldobler B."/>
            <person name="van Ham R.C.H.J."/>
            <person name="Gross R."/>
            <person name="Moya A."/>
        </authorList>
    </citation>
    <scope>NUCLEOTIDE SEQUENCE [LARGE SCALE GENOMIC DNA]</scope>
</reference>
<protein>
    <recommendedName>
        <fullName evidence="1">Ubiquinone/menaquinone biosynthesis C-methyltransferase UbiE</fullName>
        <ecNumber evidence="1">2.1.1.163</ecNumber>
        <ecNumber evidence="1">2.1.1.201</ecNumber>
    </recommendedName>
    <alternativeName>
        <fullName evidence="1">2-methoxy-6-polyprenyl-1,4-benzoquinol methylase</fullName>
    </alternativeName>
    <alternativeName>
        <fullName evidence="1">Demethylmenaquinone methyltransferase</fullName>
    </alternativeName>
</protein>
<keyword id="KW-0474">Menaquinone biosynthesis</keyword>
<keyword id="KW-0489">Methyltransferase</keyword>
<keyword id="KW-1185">Reference proteome</keyword>
<keyword id="KW-0949">S-adenosyl-L-methionine</keyword>
<keyword id="KW-0808">Transferase</keyword>
<keyword id="KW-0831">Ubiquinone biosynthesis</keyword>